<gene>
    <name evidence="1" type="primary">gpmB</name>
    <name type="ordered locus">ECED1_5268</name>
</gene>
<comment type="catalytic activity">
    <reaction evidence="1">
        <text>(2R)-2-phosphoglycerate = (2R)-3-phosphoglycerate</text>
        <dbReference type="Rhea" id="RHEA:15901"/>
        <dbReference type="ChEBI" id="CHEBI:58272"/>
        <dbReference type="ChEBI" id="CHEBI:58289"/>
    </reaction>
</comment>
<comment type="pathway">
    <text evidence="1">Carbohydrate degradation; glycolysis; pyruvate from D-glyceraldehyde 3-phosphate: step 3/5.</text>
</comment>
<comment type="similarity">
    <text evidence="1">Belongs to the phosphoglycerate mutase family. GpmB subfamily.</text>
</comment>
<keyword id="KW-0324">Glycolysis</keyword>
<keyword id="KW-0413">Isomerase</keyword>
<protein>
    <recommendedName>
        <fullName evidence="1">Probable phosphoglycerate mutase GpmB</fullName>
        <ecNumber evidence="1">5.4.2.-</ecNumber>
    </recommendedName>
    <alternativeName>
        <fullName evidence="1">PGAM</fullName>
    </alternativeName>
    <alternativeName>
        <fullName evidence="1">Phosphoglyceromutase</fullName>
    </alternativeName>
</protein>
<organism>
    <name type="scientific">Escherichia coli O81 (strain ED1a)</name>
    <dbReference type="NCBI Taxonomy" id="585397"/>
    <lineage>
        <taxon>Bacteria</taxon>
        <taxon>Pseudomonadati</taxon>
        <taxon>Pseudomonadota</taxon>
        <taxon>Gammaproteobacteria</taxon>
        <taxon>Enterobacterales</taxon>
        <taxon>Enterobacteriaceae</taxon>
        <taxon>Escherichia</taxon>
    </lineage>
</organism>
<sequence length="215" mass="24015">MLQVYLVRHGETQWNAERRIQGQSDSPLTAKGEQQAMQVATRAKELGITHIISSDLGRTRRTAEIIAQACGCDIIFDSRLRELNMGVLETRNIDSLTEEEENWRRQLVNGTVDGRIPEGESMQELSDRVNAALESCRDLPQGSRPLLVSHGIALGCLVSTILGLPAWAERRLRLRNCSISRVDYQESLWLASGWVVETAGDISHLDAPALDELQR</sequence>
<dbReference type="EC" id="5.4.2.-" evidence="1"/>
<dbReference type="EMBL" id="CU928162">
    <property type="protein sequence ID" value="CAR11219.1"/>
    <property type="molecule type" value="Genomic_DNA"/>
</dbReference>
<dbReference type="RefSeq" id="WP_000942350.1">
    <property type="nucleotide sequence ID" value="NC_011745.1"/>
</dbReference>
<dbReference type="SMR" id="B7MTE3"/>
<dbReference type="KEGG" id="ecq:ECED1_5268"/>
<dbReference type="HOGENOM" id="CLU_033323_9_5_6"/>
<dbReference type="UniPathway" id="UPA00109">
    <property type="reaction ID" value="UER00186"/>
</dbReference>
<dbReference type="Proteomes" id="UP000000748">
    <property type="component" value="Chromosome"/>
</dbReference>
<dbReference type="GO" id="GO:0005737">
    <property type="term" value="C:cytoplasm"/>
    <property type="evidence" value="ECO:0007669"/>
    <property type="project" value="TreeGrafter"/>
</dbReference>
<dbReference type="GO" id="GO:0016791">
    <property type="term" value="F:phosphatase activity"/>
    <property type="evidence" value="ECO:0007669"/>
    <property type="project" value="TreeGrafter"/>
</dbReference>
<dbReference type="GO" id="GO:0004619">
    <property type="term" value="F:phosphoglycerate mutase activity"/>
    <property type="evidence" value="ECO:0007669"/>
    <property type="project" value="UniProtKB-UniRule"/>
</dbReference>
<dbReference type="GO" id="GO:0006096">
    <property type="term" value="P:glycolytic process"/>
    <property type="evidence" value="ECO:0007669"/>
    <property type="project" value="UniProtKB-UniRule"/>
</dbReference>
<dbReference type="CDD" id="cd07067">
    <property type="entry name" value="HP_PGM_like"/>
    <property type="match status" value="1"/>
</dbReference>
<dbReference type="Gene3D" id="3.40.50.1240">
    <property type="entry name" value="Phosphoglycerate mutase-like"/>
    <property type="match status" value="1"/>
</dbReference>
<dbReference type="HAMAP" id="MF_01040">
    <property type="entry name" value="PGAM_GpmB"/>
    <property type="match status" value="1"/>
</dbReference>
<dbReference type="InterPro" id="IPR013078">
    <property type="entry name" value="His_Pase_superF_clade-1"/>
</dbReference>
<dbReference type="InterPro" id="IPR029033">
    <property type="entry name" value="His_PPase_superfam"/>
</dbReference>
<dbReference type="InterPro" id="IPR001345">
    <property type="entry name" value="PG/BPGM_mutase_AS"/>
</dbReference>
<dbReference type="InterPro" id="IPR050275">
    <property type="entry name" value="PGM_Phosphatase"/>
</dbReference>
<dbReference type="InterPro" id="IPR023086">
    <property type="entry name" value="Phosphoglycerate_mutase_GpmB"/>
</dbReference>
<dbReference type="NCBIfam" id="NF002901">
    <property type="entry name" value="PRK03482.1"/>
    <property type="match status" value="1"/>
</dbReference>
<dbReference type="PANTHER" id="PTHR48100">
    <property type="entry name" value="BROAD-SPECIFICITY PHOSPHATASE YOR283W-RELATED"/>
    <property type="match status" value="1"/>
</dbReference>
<dbReference type="PANTHER" id="PTHR48100:SF1">
    <property type="entry name" value="HISTIDINE PHOSPHATASE FAMILY PROTEIN-RELATED"/>
    <property type="match status" value="1"/>
</dbReference>
<dbReference type="Pfam" id="PF00300">
    <property type="entry name" value="His_Phos_1"/>
    <property type="match status" value="1"/>
</dbReference>
<dbReference type="SMART" id="SM00855">
    <property type="entry name" value="PGAM"/>
    <property type="match status" value="1"/>
</dbReference>
<dbReference type="SUPFAM" id="SSF53254">
    <property type="entry name" value="Phosphoglycerate mutase-like"/>
    <property type="match status" value="1"/>
</dbReference>
<dbReference type="PROSITE" id="PS00175">
    <property type="entry name" value="PG_MUTASE"/>
    <property type="match status" value="1"/>
</dbReference>
<name>GPMB_ECO81</name>
<reference key="1">
    <citation type="journal article" date="2009" name="PLoS Genet.">
        <title>Organised genome dynamics in the Escherichia coli species results in highly diverse adaptive paths.</title>
        <authorList>
            <person name="Touchon M."/>
            <person name="Hoede C."/>
            <person name="Tenaillon O."/>
            <person name="Barbe V."/>
            <person name="Baeriswyl S."/>
            <person name="Bidet P."/>
            <person name="Bingen E."/>
            <person name="Bonacorsi S."/>
            <person name="Bouchier C."/>
            <person name="Bouvet O."/>
            <person name="Calteau A."/>
            <person name="Chiapello H."/>
            <person name="Clermont O."/>
            <person name="Cruveiller S."/>
            <person name="Danchin A."/>
            <person name="Diard M."/>
            <person name="Dossat C."/>
            <person name="Karoui M.E."/>
            <person name="Frapy E."/>
            <person name="Garry L."/>
            <person name="Ghigo J.M."/>
            <person name="Gilles A.M."/>
            <person name="Johnson J."/>
            <person name="Le Bouguenec C."/>
            <person name="Lescat M."/>
            <person name="Mangenot S."/>
            <person name="Martinez-Jehanne V."/>
            <person name="Matic I."/>
            <person name="Nassif X."/>
            <person name="Oztas S."/>
            <person name="Petit M.A."/>
            <person name="Pichon C."/>
            <person name="Rouy Z."/>
            <person name="Ruf C.S."/>
            <person name="Schneider D."/>
            <person name="Tourret J."/>
            <person name="Vacherie B."/>
            <person name="Vallenet D."/>
            <person name="Medigue C."/>
            <person name="Rocha E.P.C."/>
            <person name="Denamur E."/>
        </authorList>
    </citation>
    <scope>NUCLEOTIDE SEQUENCE [LARGE SCALE GENOMIC DNA]</scope>
    <source>
        <strain>ED1a</strain>
    </source>
</reference>
<proteinExistence type="inferred from homology"/>
<accession>B7MTE3</accession>
<feature type="chain" id="PRO_1000149539" description="Probable phosphoglycerate mutase GpmB">
    <location>
        <begin position="1"/>
        <end position="215"/>
    </location>
</feature>
<feature type="active site" description="Tele-phosphohistidine intermediate" evidence="1">
    <location>
        <position position="9"/>
    </location>
</feature>
<feature type="active site" description="Proton donor/acceptor" evidence="1">
    <location>
        <position position="82"/>
    </location>
</feature>
<feature type="binding site" evidence="1">
    <location>
        <begin position="8"/>
        <end position="15"/>
    </location>
    <ligand>
        <name>substrate</name>
    </ligand>
</feature>
<feature type="binding site" evidence="1">
    <location>
        <begin position="21"/>
        <end position="22"/>
    </location>
    <ligand>
        <name>substrate</name>
    </ligand>
</feature>
<feature type="binding site" evidence="1">
    <location>
        <position position="58"/>
    </location>
    <ligand>
        <name>substrate</name>
    </ligand>
</feature>
<feature type="binding site" evidence="1">
    <location>
        <position position="60"/>
    </location>
    <ligand>
        <name>substrate</name>
    </ligand>
</feature>
<feature type="binding site" evidence="1">
    <location>
        <begin position="82"/>
        <end position="85"/>
    </location>
    <ligand>
        <name>substrate</name>
    </ligand>
</feature>
<feature type="binding site" evidence="1">
    <location>
        <begin position="104"/>
        <end position="105"/>
    </location>
    <ligand>
        <name>substrate</name>
    </ligand>
</feature>
<feature type="binding site" evidence="1">
    <location>
        <begin position="151"/>
        <end position="152"/>
    </location>
    <ligand>
        <name>substrate</name>
    </ligand>
</feature>
<feature type="site" description="Transition state stabilizer" evidence="1">
    <location>
        <position position="150"/>
    </location>
</feature>
<evidence type="ECO:0000255" key="1">
    <source>
        <dbReference type="HAMAP-Rule" id="MF_01040"/>
    </source>
</evidence>